<name>DNAA_STAAC</name>
<proteinExistence type="inferred from homology"/>
<sequence length="453" mass="51966">MSEKEIWEKVLEIAQEKLSAVSYSTFLKDTELYTIKDGEAIVLSSIPFNANWLNQQYAEIIQAILFDVVGYEVKPHFITTEELANYSNNETATPKETTKPSTETTEDNHVLGREQFNAHNTFDTFVIGPGNRFPHAASLAVAEAPAKAYNPLFIYGGVGLGKTHLMHAIGHHVLDNNPDAKVIYTSSEKFTNEFIKSIRDNEGEAFRERYRNIDVLLIDDIQFIQNKVQTQEEFFYTFNELHQNNKQIVISSDRPPKEIAQLEDRLRSRFEWGLIVDITPPDYETRMAILQKKIEEEKLDIPPEALNYIANQIQSNIRELEGALTRLLAYSQLLGKPITTELTAEALKDIIQAPKSKKITIQDIQKIVGQYYNVRIEDFSAKKRTKSIAYPRQIAMYLSRELTDFSLPKIGEEFGGRDHTTVIHAHEKISKDLKEDPIFKQEVENLEKEIRNV</sequence>
<organism>
    <name type="scientific">Staphylococcus aureus (strain COL)</name>
    <dbReference type="NCBI Taxonomy" id="93062"/>
    <lineage>
        <taxon>Bacteria</taxon>
        <taxon>Bacillati</taxon>
        <taxon>Bacillota</taxon>
        <taxon>Bacilli</taxon>
        <taxon>Bacillales</taxon>
        <taxon>Staphylococcaceae</taxon>
        <taxon>Staphylococcus</taxon>
    </lineage>
</organism>
<gene>
    <name evidence="1" type="primary">dnaA</name>
    <name type="ordered locus">SACOL0001</name>
</gene>
<reference key="1">
    <citation type="journal article" date="2005" name="J. Bacteriol.">
        <title>Insights on evolution of virulence and resistance from the complete genome analysis of an early methicillin-resistant Staphylococcus aureus strain and a biofilm-producing methicillin-resistant Staphylococcus epidermidis strain.</title>
        <authorList>
            <person name="Gill S.R."/>
            <person name="Fouts D.E."/>
            <person name="Archer G.L."/>
            <person name="Mongodin E.F."/>
            <person name="DeBoy R.T."/>
            <person name="Ravel J."/>
            <person name="Paulsen I.T."/>
            <person name="Kolonay J.F."/>
            <person name="Brinkac L.M."/>
            <person name="Beanan M.J."/>
            <person name="Dodson R.J."/>
            <person name="Daugherty S.C."/>
            <person name="Madupu R."/>
            <person name="Angiuoli S.V."/>
            <person name="Durkin A.S."/>
            <person name="Haft D.H."/>
            <person name="Vamathevan J.J."/>
            <person name="Khouri H."/>
            <person name="Utterback T.R."/>
            <person name="Lee C."/>
            <person name="Dimitrov G."/>
            <person name="Jiang L."/>
            <person name="Qin H."/>
            <person name="Weidman J."/>
            <person name="Tran K."/>
            <person name="Kang K.H."/>
            <person name="Hance I.R."/>
            <person name="Nelson K.E."/>
            <person name="Fraser C.M."/>
        </authorList>
    </citation>
    <scope>NUCLEOTIDE SEQUENCE [LARGE SCALE GENOMIC DNA]</scope>
    <source>
        <strain>COL</strain>
    </source>
</reference>
<evidence type="ECO:0000255" key="1">
    <source>
        <dbReference type="HAMAP-Rule" id="MF_00377"/>
    </source>
</evidence>
<feature type="chain" id="PRO_0000114258" description="Chromosomal replication initiator protein DnaA">
    <location>
        <begin position="1"/>
        <end position="453"/>
    </location>
</feature>
<feature type="region of interest" description="Domain I, interacts with DnaA modulators" evidence="1">
    <location>
        <begin position="1"/>
        <end position="71"/>
    </location>
</feature>
<feature type="region of interest" description="Domain II" evidence="1">
    <location>
        <begin position="71"/>
        <end position="114"/>
    </location>
</feature>
<feature type="region of interest" description="Domain III, AAA+ region" evidence="1">
    <location>
        <begin position="115"/>
        <end position="331"/>
    </location>
</feature>
<feature type="region of interest" description="Domain IV, binds dsDNA" evidence="1">
    <location>
        <begin position="332"/>
        <end position="453"/>
    </location>
</feature>
<feature type="binding site" evidence="1">
    <location>
        <position position="159"/>
    </location>
    <ligand>
        <name>ATP</name>
        <dbReference type="ChEBI" id="CHEBI:30616"/>
    </ligand>
</feature>
<feature type="binding site" evidence="1">
    <location>
        <position position="161"/>
    </location>
    <ligand>
        <name>ATP</name>
        <dbReference type="ChEBI" id="CHEBI:30616"/>
    </ligand>
</feature>
<feature type="binding site" evidence="1">
    <location>
        <position position="162"/>
    </location>
    <ligand>
        <name>ATP</name>
        <dbReference type="ChEBI" id="CHEBI:30616"/>
    </ligand>
</feature>
<feature type="binding site" evidence="1">
    <location>
        <position position="163"/>
    </location>
    <ligand>
        <name>ATP</name>
        <dbReference type="ChEBI" id="CHEBI:30616"/>
    </ligand>
</feature>
<accession>Q5HJZ5</accession>
<protein>
    <recommendedName>
        <fullName evidence="1">Chromosomal replication initiator protein DnaA</fullName>
    </recommendedName>
</protein>
<dbReference type="EMBL" id="CP000046">
    <property type="protein sequence ID" value="AAW37389.1"/>
    <property type="molecule type" value="Genomic_DNA"/>
</dbReference>
<dbReference type="RefSeq" id="WP_001290433.1">
    <property type="nucleotide sequence ID" value="NZ_JBGOFO010000001.1"/>
</dbReference>
<dbReference type="SMR" id="Q5HJZ5"/>
<dbReference type="KEGG" id="sac:SACOL0001"/>
<dbReference type="HOGENOM" id="CLU_026910_3_1_9"/>
<dbReference type="Proteomes" id="UP000000530">
    <property type="component" value="Chromosome"/>
</dbReference>
<dbReference type="GO" id="GO:0005737">
    <property type="term" value="C:cytoplasm"/>
    <property type="evidence" value="ECO:0007669"/>
    <property type="project" value="UniProtKB-SubCell"/>
</dbReference>
<dbReference type="GO" id="GO:0005886">
    <property type="term" value="C:plasma membrane"/>
    <property type="evidence" value="ECO:0007669"/>
    <property type="project" value="TreeGrafter"/>
</dbReference>
<dbReference type="GO" id="GO:0005524">
    <property type="term" value="F:ATP binding"/>
    <property type="evidence" value="ECO:0007669"/>
    <property type="project" value="UniProtKB-UniRule"/>
</dbReference>
<dbReference type="GO" id="GO:0016887">
    <property type="term" value="F:ATP hydrolysis activity"/>
    <property type="evidence" value="ECO:0007669"/>
    <property type="project" value="InterPro"/>
</dbReference>
<dbReference type="GO" id="GO:0003688">
    <property type="term" value="F:DNA replication origin binding"/>
    <property type="evidence" value="ECO:0007669"/>
    <property type="project" value="UniProtKB-UniRule"/>
</dbReference>
<dbReference type="GO" id="GO:0008289">
    <property type="term" value="F:lipid binding"/>
    <property type="evidence" value="ECO:0007669"/>
    <property type="project" value="UniProtKB-KW"/>
</dbReference>
<dbReference type="GO" id="GO:0006270">
    <property type="term" value="P:DNA replication initiation"/>
    <property type="evidence" value="ECO:0007669"/>
    <property type="project" value="UniProtKB-UniRule"/>
</dbReference>
<dbReference type="GO" id="GO:0006275">
    <property type="term" value="P:regulation of DNA replication"/>
    <property type="evidence" value="ECO:0007669"/>
    <property type="project" value="UniProtKB-UniRule"/>
</dbReference>
<dbReference type="CDD" id="cd00009">
    <property type="entry name" value="AAA"/>
    <property type="match status" value="1"/>
</dbReference>
<dbReference type="CDD" id="cd06571">
    <property type="entry name" value="Bac_DnaA_C"/>
    <property type="match status" value="1"/>
</dbReference>
<dbReference type="FunFam" id="1.10.1750.10:FF:000003">
    <property type="entry name" value="Chromosomal replication initiator protein DnaA"/>
    <property type="match status" value="1"/>
</dbReference>
<dbReference type="FunFam" id="1.10.8.60:FF:000003">
    <property type="entry name" value="Chromosomal replication initiator protein DnaA"/>
    <property type="match status" value="1"/>
</dbReference>
<dbReference type="FunFam" id="3.40.50.300:FF:000150">
    <property type="entry name" value="Chromosomal replication initiator protein DnaA"/>
    <property type="match status" value="1"/>
</dbReference>
<dbReference type="Gene3D" id="1.10.1750.10">
    <property type="match status" value="1"/>
</dbReference>
<dbReference type="Gene3D" id="1.10.8.60">
    <property type="match status" value="1"/>
</dbReference>
<dbReference type="Gene3D" id="3.30.300.180">
    <property type="match status" value="1"/>
</dbReference>
<dbReference type="Gene3D" id="3.40.50.300">
    <property type="entry name" value="P-loop containing nucleotide triphosphate hydrolases"/>
    <property type="match status" value="1"/>
</dbReference>
<dbReference type="HAMAP" id="MF_00377">
    <property type="entry name" value="DnaA_bact"/>
    <property type="match status" value="1"/>
</dbReference>
<dbReference type="InterPro" id="IPR003593">
    <property type="entry name" value="AAA+_ATPase"/>
</dbReference>
<dbReference type="InterPro" id="IPR001957">
    <property type="entry name" value="Chromosome_initiator_DnaA"/>
</dbReference>
<dbReference type="InterPro" id="IPR020591">
    <property type="entry name" value="Chromosome_initiator_DnaA-like"/>
</dbReference>
<dbReference type="InterPro" id="IPR018312">
    <property type="entry name" value="Chromosome_initiator_DnaA_CS"/>
</dbReference>
<dbReference type="InterPro" id="IPR013159">
    <property type="entry name" value="DnaA_C"/>
</dbReference>
<dbReference type="InterPro" id="IPR013317">
    <property type="entry name" value="DnaA_dom"/>
</dbReference>
<dbReference type="InterPro" id="IPR024633">
    <property type="entry name" value="DnaA_N_dom"/>
</dbReference>
<dbReference type="InterPro" id="IPR038454">
    <property type="entry name" value="DnaA_N_sf"/>
</dbReference>
<dbReference type="InterPro" id="IPR027417">
    <property type="entry name" value="P-loop_NTPase"/>
</dbReference>
<dbReference type="InterPro" id="IPR010921">
    <property type="entry name" value="Trp_repressor/repl_initiator"/>
</dbReference>
<dbReference type="NCBIfam" id="TIGR00362">
    <property type="entry name" value="DnaA"/>
    <property type="match status" value="1"/>
</dbReference>
<dbReference type="PANTHER" id="PTHR30050">
    <property type="entry name" value="CHROMOSOMAL REPLICATION INITIATOR PROTEIN DNAA"/>
    <property type="match status" value="1"/>
</dbReference>
<dbReference type="PANTHER" id="PTHR30050:SF2">
    <property type="entry name" value="CHROMOSOMAL REPLICATION INITIATOR PROTEIN DNAA"/>
    <property type="match status" value="1"/>
</dbReference>
<dbReference type="Pfam" id="PF00308">
    <property type="entry name" value="Bac_DnaA"/>
    <property type="match status" value="1"/>
</dbReference>
<dbReference type="Pfam" id="PF08299">
    <property type="entry name" value="Bac_DnaA_C"/>
    <property type="match status" value="1"/>
</dbReference>
<dbReference type="Pfam" id="PF11638">
    <property type="entry name" value="DnaA_N"/>
    <property type="match status" value="1"/>
</dbReference>
<dbReference type="PRINTS" id="PR00051">
    <property type="entry name" value="DNAA"/>
</dbReference>
<dbReference type="SMART" id="SM00382">
    <property type="entry name" value="AAA"/>
    <property type="match status" value="1"/>
</dbReference>
<dbReference type="SMART" id="SM00760">
    <property type="entry name" value="Bac_DnaA_C"/>
    <property type="match status" value="1"/>
</dbReference>
<dbReference type="SUPFAM" id="SSF52540">
    <property type="entry name" value="P-loop containing nucleoside triphosphate hydrolases"/>
    <property type="match status" value="1"/>
</dbReference>
<dbReference type="SUPFAM" id="SSF48295">
    <property type="entry name" value="TrpR-like"/>
    <property type="match status" value="1"/>
</dbReference>
<dbReference type="PROSITE" id="PS01008">
    <property type="entry name" value="DNAA"/>
    <property type="match status" value="1"/>
</dbReference>
<keyword id="KW-0067">ATP-binding</keyword>
<keyword id="KW-0963">Cytoplasm</keyword>
<keyword id="KW-0235">DNA replication</keyword>
<keyword id="KW-0238">DNA-binding</keyword>
<keyword id="KW-0446">Lipid-binding</keyword>
<keyword id="KW-0547">Nucleotide-binding</keyword>
<comment type="function">
    <text evidence="1">Plays an essential role in the initiation and regulation of chromosomal replication. ATP-DnaA binds to the origin of replication (oriC) to initiate formation of the DNA replication initiation complex once per cell cycle. Binds the DnaA box (a 9 base pair repeat at the origin) and separates the double-stranded (ds)DNA. Forms a right-handed helical filament on oriC DNA; dsDNA binds to the exterior of the filament while single-stranded (ss)DNA is stabiized in the filament's interior. The ATP-DnaA-oriC complex binds and stabilizes one strand of the AT-rich DNA unwinding element (DUE), permitting loading of DNA polymerase. After initiation quickly degrades to an ADP-DnaA complex that is not apt for DNA replication. Binds acidic phospholipids.</text>
</comment>
<comment type="subunit">
    <text evidence="1">Oligomerizes as a right-handed, spiral filament on DNA at oriC.</text>
</comment>
<comment type="subcellular location">
    <subcellularLocation>
        <location evidence="1">Cytoplasm</location>
    </subcellularLocation>
</comment>
<comment type="domain">
    <text evidence="1">Domain I is involved in oligomerization and binding regulators, domain II is flexibile and of varying length in different bacteria, domain III forms the AAA+ region, while domain IV binds dsDNA.</text>
</comment>
<comment type="similarity">
    <text evidence="1">Belongs to the DnaA family.</text>
</comment>